<dbReference type="EC" id="2.4.2.64" evidence="1 2"/>
<dbReference type="EMBL" id="BC054695">
    <property type="protein sequence ID" value="AAH54695.1"/>
    <property type="molecule type" value="mRNA"/>
</dbReference>
<dbReference type="RefSeq" id="NP_957304.1">
    <property type="nucleotide sequence ID" value="NM_201010.1"/>
</dbReference>
<dbReference type="SMR" id="Q7SYK1"/>
<dbReference type="FunCoup" id="Q7SYK1">
    <property type="interactions" value="663"/>
</dbReference>
<dbReference type="STRING" id="7955.ENSDARP00000063286"/>
<dbReference type="PaxDb" id="7955-ENSDARP00000063286"/>
<dbReference type="GeneID" id="393985"/>
<dbReference type="KEGG" id="dre:393985"/>
<dbReference type="AGR" id="ZFIN:ZDB-GENE-040426-1625"/>
<dbReference type="CTD" id="81890"/>
<dbReference type="ZFIN" id="ZDB-GENE-040426-1625">
    <property type="gene designation" value="qtrt1"/>
</dbReference>
<dbReference type="eggNOG" id="KOG3908">
    <property type="taxonomic scope" value="Eukaryota"/>
</dbReference>
<dbReference type="InParanoid" id="Q7SYK1"/>
<dbReference type="OrthoDB" id="10249838at2759"/>
<dbReference type="PhylomeDB" id="Q7SYK1"/>
<dbReference type="PRO" id="PR:Q7SYK1"/>
<dbReference type="Proteomes" id="UP000000437">
    <property type="component" value="Chromosome 3"/>
</dbReference>
<dbReference type="GO" id="GO:0005741">
    <property type="term" value="C:mitochondrial outer membrane"/>
    <property type="evidence" value="ECO:0007669"/>
    <property type="project" value="UniProtKB-SubCell"/>
</dbReference>
<dbReference type="GO" id="GO:0046872">
    <property type="term" value="F:metal ion binding"/>
    <property type="evidence" value="ECO:0007669"/>
    <property type="project" value="UniProtKB-KW"/>
</dbReference>
<dbReference type="GO" id="GO:0046982">
    <property type="term" value="F:protein heterodimerization activity"/>
    <property type="evidence" value="ECO:0000250"/>
    <property type="project" value="UniProtKB"/>
</dbReference>
<dbReference type="GO" id="GO:0042803">
    <property type="term" value="F:protein homodimerization activity"/>
    <property type="evidence" value="ECO:0000250"/>
    <property type="project" value="UniProtKB"/>
</dbReference>
<dbReference type="GO" id="GO:0008479">
    <property type="term" value="F:tRNA-guanosine(34) queuine transglycosylase activity"/>
    <property type="evidence" value="ECO:0000250"/>
    <property type="project" value="UniProtKB"/>
</dbReference>
<dbReference type="GO" id="GO:0101030">
    <property type="term" value="P:tRNA-guanine transglycosylation"/>
    <property type="evidence" value="ECO:0000318"/>
    <property type="project" value="GO_Central"/>
</dbReference>
<dbReference type="FunFam" id="3.20.20.105:FF:000001">
    <property type="entry name" value="Queuine tRNA-ribosyltransferase"/>
    <property type="match status" value="1"/>
</dbReference>
<dbReference type="Gene3D" id="3.20.20.105">
    <property type="entry name" value="Queuine tRNA-ribosyltransferase-like"/>
    <property type="match status" value="1"/>
</dbReference>
<dbReference type="HAMAP" id="MF_00168">
    <property type="entry name" value="Q_tRNA_Tgt"/>
    <property type="match status" value="1"/>
</dbReference>
<dbReference type="InterPro" id="IPR004803">
    <property type="entry name" value="TGT"/>
</dbReference>
<dbReference type="InterPro" id="IPR036511">
    <property type="entry name" value="TGT-like_sf"/>
</dbReference>
<dbReference type="InterPro" id="IPR002616">
    <property type="entry name" value="tRNA_ribo_trans-like"/>
</dbReference>
<dbReference type="NCBIfam" id="TIGR00430">
    <property type="entry name" value="Q_tRNA_tgt"/>
    <property type="match status" value="1"/>
</dbReference>
<dbReference type="NCBIfam" id="TIGR00449">
    <property type="entry name" value="tgt_general"/>
    <property type="match status" value="1"/>
</dbReference>
<dbReference type="PANTHER" id="PTHR43530">
    <property type="entry name" value="QUEUINE TRNA-RIBOSYLTRANSFERASE CATALYTIC SUBUNIT 1"/>
    <property type="match status" value="1"/>
</dbReference>
<dbReference type="PANTHER" id="PTHR43530:SF1">
    <property type="entry name" value="QUEUINE TRNA-RIBOSYLTRANSFERASE CATALYTIC SUBUNIT 1"/>
    <property type="match status" value="1"/>
</dbReference>
<dbReference type="Pfam" id="PF01702">
    <property type="entry name" value="TGT"/>
    <property type="match status" value="1"/>
</dbReference>
<dbReference type="SUPFAM" id="SSF51713">
    <property type="entry name" value="tRNA-guanine transglycosylase"/>
    <property type="match status" value="1"/>
</dbReference>
<gene>
    <name evidence="2" type="primary">qtrt1</name>
    <name type="ORF">zgc:66378</name>
</gene>
<proteinExistence type="evidence at transcript level"/>
<name>TGT_DANRE</name>
<sequence length="400" mass="44425">MASVKAVSSAAPLALRIVAECPVSKARACSLTLPHCAVNTPVFMPVGTQGTMKGITADQLEDLDCQICLGNTYHLGMRPGPDLIEKANGLHGFMKWRRNLLTDSGGFQMVSLVELSEVTEEGVTFRSPYDGKEILLTPEQSIAIQNSLGSDIMMQLDDVVSSTVKGPRVEEAMHRSVRWLDRCIAANKNPDRQNLFAIIQGGLDAELRKACLKEMTKRDVPGFAIGGLGGGEEKDDFWKMVTLSTDHLPREKPRYLMGVGYAVDLVVCVALGCDMFDCVFPTRTARFGSALVPWGSLQLKQKQYAKDFQPIDPDCQCPTCRRHSRAYLHALFKSDTAAMHHITIHNISYQLSLMRSVRQSIIDQRFPEFVKEFMKRMFPSSSQYPSWAVEALQSVNICLS</sequence>
<reference key="1">
    <citation type="submission" date="2003-07" db="EMBL/GenBank/DDBJ databases">
        <authorList>
            <consortium name="NIH - Zebrafish Gene Collection (ZGC) project"/>
        </authorList>
    </citation>
    <scope>NUCLEOTIDE SEQUENCE [LARGE SCALE MRNA]</scope>
</reference>
<reference key="2">
    <citation type="journal article" date="2023" name="Cell">
        <title>Glycosylated queuosines in tRNAs optimize translational rate and post-embryonic growth.</title>
        <authorList>
            <person name="Zhao X."/>
            <person name="Ma D."/>
            <person name="Ishiguro K."/>
            <person name="Saito H."/>
            <person name="Akichika S."/>
            <person name="Matsuzawa I."/>
            <person name="Mito M."/>
            <person name="Irie T."/>
            <person name="Ishibashi K."/>
            <person name="Wakabayashi K."/>
            <person name="Sakaguchi Y."/>
            <person name="Yokoyama T."/>
            <person name="Mishima Y."/>
            <person name="Shirouzu M."/>
            <person name="Iwasaki S."/>
            <person name="Suzuki T."/>
            <person name="Suzuki T."/>
        </authorList>
    </citation>
    <scope>DISRUPTION PHENOTYPE</scope>
</reference>
<evidence type="ECO:0000250" key="1">
    <source>
        <dbReference type="UniProtKB" id="Q9BXR0"/>
    </source>
</evidence>
<evidence type="ECO:0000255" key="2">
    <source>
        <dbReference type="HAMAP-Rule" id="MF_03218"/>
    </source>
</evidence>
<evidence type="ECO:0000269" key="3">
    <source>
    </source>
</evidence>
<accession>Q7SYK1</accession>
<feature type="chain" id="PRO_0000383947" description="Queuine tRNA-ribosyltransferase catalytic subunit 1">
    <location>
        <begin position="1"/>
        <end position="400"/>
    </location>
</feature>
<feature type="region of interest" description="RNA binding" evidence="2">
    <location>
        <begin position="258"/>
        <end position="264"/>
    </location>
</feature>
<feature type="region of interest" description="RNA binding; important for wobble base 34 recognition" evidence="2">
    <location>
        <begin position="282"/>
        <end position="286"/>
    </location>
</feature>
<feature type="active site" description="Proton acceptor" evidence="2">
    <location>
        <position position="103"/>
    </location>
</feature>
<feature type="active site" description="Nucleophile" evidence="2">
    <location>
        <position position="277"/>
    </location>
</feature>
<feature type="binding site" evidence="2">
    <location>
        <begin position="103"/>
        <end position="107"/>
    </location>
    <ligand>
        <name>queuine</name>
        <dbReference type="ChEBI" id="CHEBI:17433"/>
    </ligand>
</feature>
<feature type="binding site" evidence="2">
    <location>
        <position position="157"/>
    </location>
    <ligand>
        <name>queuine</name>
        <dbReference type="ChEBI" id="CHEBI:17433"/>
    </ligand>
</feature>
<feature type="binding site" evidence="2">
    <location>
        <position position="200"/>
    </location>
    <ligand>
        <name>queuine</name>
        <dbReference type="ChEBI" id="CHEBI:17433"/>
    </ligand>
</feature>
<feature type="binding site" evidence="2">
    <location>
        <position position="227"/>
    </location>
    <ligand>
        <name>queuine</name>
        <dbReference type="ChEBI" id="CHEBI:17433"/>
    </ligand>
</feature>
<feature type="binding site" evidence="2">
    <location>
        <position position="315"/>
    </location>
    <ligand>
        <name>Zn(2+)</name>
        <dbReference type="ChEBI" id="CHEBI:29105"/>
    </ligand>
</feature>
<feature type="binding site" evidence="2">
    <location>
        <position position="317"/>
    </location>
    <ligand>
        <name>Zn(2+)</name>
        <dbReference type="ChEBI" id="CHEBI:29105"/>
    </ligand>
</feature>
<feature type="binding site" evidence="2">
    <location>
        <position position="320"/>
    </location>
    <ligand>
        <name>Zn(2+)</name>
        <dbReference type="ChEBI" id="CHEBI:29105"/>
    </ligand>
</feature>
<feature type="binding site" evidence="2">
    <location>
        <position position="345"/>
    </location>
    <ligand>
        <name>Zn(2+)</name>
        <dbReference type="ChEBI" id="CHEBI:29105"/>
    </ligand>
</feature>
<protein>
    <recommendedName>
        <fullName evidence="2">Queuine tRNA-ribosyltransferase catalytic subunit 1</fullName>
        <ecNumber evidence="1 2">2.4.2.64</ecNumber>
    </recommendedName>
    <alternativeName>
        <fullName evidence="2">Guanine insertion enzyme</fullName>
    </alternativeName>
    <alternativeName>
        <fullName evidence="2">tRNA-guanine transglycosylase</fullName>
    </alternativeName>
</protein>
<organism>
    <name type="scientific">Danio rerio</name>
    <name type="common">Zebrafish</name>
    <name type="synonym">Brachydanio rerio</name>
    <dbReference type="NCBI Taxonomy" id="7955"/>
    <lineage>
        <taxon>Eukaryota</taxon>
        <taxon>Metazoa</taxon>
        <taxon>Chordata</taxon>
        <taxon>Craniata</taxon>
        <taxon>Vertebrata</taxon>
        <taxon>Euteleostomi</taxon>
        <taxon>Actinopterygii</taxon>
        <taxon>Neopterygii</taxon>
        <taxon>Teleostei</taxon>
        <taxon>Ostariophysi</taxon>
        <taxon>Cypriniformes</taxon>
        <taxon>Danionidae</taxon>
        <taxon>Danioninae</taxon>
        <taxon>Danio</taxon>
    </lineage>
</organism>
<keyword id="KW-0963">Cytoplasm</keyword>
<keyword id="KW-0328">Glycosyltransferase</keyword>
<keyword id="KW-0472">Membrane</keyword>
<keyword id="KW-0479">Metal-binding</keyword>
<keyword id="KW-0496">Mitochondrion</keyword>
<keyword id="KW-1000">Mitochondrion outer membrane</keyword>
<keyword id="KW-1185">Reference proteome</keyword>
<keyword id="KW-0808">Transferase</keyword>
<keyword id="KW-0819">tRNA processing</keyword>
<keyword id="KW-0862">Zinc</keyword>
<comment type="function">
    <text evidence="2">Catalytic subunit of the queuine tRNA-ribosyltransferase (TGT) that catalyzes the base-exchange of a guanine (G) residue with queuine (Q) at position 34 (anticodon wobble position) in tRNAs with GU(N) anticodons (tRNA-Asp, -Asn, -His and -Tyr), resulting in the hypermodified nucleoside queuosine (7-(((4,5-cis-dihydroxy-2-cyclopenten-1-yl)amino)methyl)-7-deazaguanosine). Catalysis occurs through a double-displacement mechanism. The nucleophile active site attacks the C1' of nucleotide 34 to detach the guanine base from the RNA, forming a covalent enzyme-RNA intermediate. The proton acceptor active site deprotonates the incoming queuine, allowing a nucleophilic attack on the C1' of the ribose to form the product.</text>
</comment>
<comment type="catalytic activity">
    <reaction evidence="2">
        <text>guanosine(34) in tRNA + queuine = queuosine(34) in tRNA + guanine</text>
        <dbReference type="Rhea" id="RHEA:16633"/>
        <dbReference type="Rhea" id="RHEA-COMP:10341"/>
        <dbReference type="Rhea" id="RHEA-COMP:18571"/>
        <dbReference type="ChEBI" id="CHEBI:16235"/>
        <dbReference type="ChEBI" id="CHEBI:17433"/>
        <dbReference type="ChEBI" id="CHEBI:74269"/>
        <dbReference type="ChEBI" id="CHEBI:194431"/>
        <dbReference type="EC" id="2.4.2.64"/>
    </reaction>
</comment>
<comment type="cofactor">
    <cofactor evidence="2">
        <name>Zn(2+)</name>
        <dbReference type="ChEBI" id="CHEBI:29105"/>
    </cofactor>
</comment>
<comment type="subunit">
    <text evidence="2">Heterodimer of a catalytic subunit qtrt1 and an accessory subunit qtrt2.</text>
</comment>
<comment type="subcellular location">
    <subcellularLocation>
        <location evidence="2">Cytoplasm</location>
    </subcellularLocation>
    <subcellularLocation>
        <location evidence="2">Mitochondrion outer membrane</location>
        <topology evidence="2">Peripheral membrane protein</topology>
        <orientation evidence="2">Cytoplasmic side</orientation>
    </subcellularLocation>
    <text evidence="2">Weakly associates with mitochondria, possibly via qtrt2.</text>
</comment>
<comment type="disruption phenotype">
    <text evidence="3">Decreased postembryonic growth, characterized by shortened body length.</text>
</comment>
<comment type="similarity">
    <text evidence="2">Belongs to the queuine tRNA-ribosyltransferase family.</text>
</comment>